<comment type="similarity">
    <text evidence="1">Belongs to the universal ribosomal protein uS2 family.</text>
</comment>
<gene>
    <name evidence="1" type="primary">rpsB</name>
    <name type="ordered locus">Gbem_2756</name>
</gene>
<name>RS2_CITBB</name>
<evidence type="ECO:0000255" key="1">
    <source>
        <dbReference type="HAMAP-Rule" id="MF_00291"/>
    </source>
</evidence>
<evidence type="ECO:0000256" key="2">
    <source>
        <dbReference type="SAM" id="MobiDB-lite"/>
    </source>
</evidence>
<evidence type="ECO:0000305" key="3"/>
<dbReference type="EMBL" id="CP001124">
    <property type="protein sequence ID" value="ACH39760.1"/>
    <property type="molecule type" value="Genomic_DNA"/>
</dbReference>
<dbReference type="RefSeq" id="WP_012531186.1">
    <property type="nucleotide sequence ID" value="NC_011146.1"/>
</dbReference>
<dbReference type="SMR" id="B5EHW1"/>
<dbReference type="STRING" id="404380.Gbem_2756"/>
<dbReference type="KEGG" id="gbm:Gbem_2756"/>
<dbReference type="eggNOG" id="COG0052">
    <property type="taxonomic scope" value="Bacteria"/>
</dbReference>
<dbReference type="HOGENOM" id="CLU_040318_1_2_7"/>
<dbReference type="OrthoDB" id="9808036at2"/>
<dbReference type="Proteomes" id="UP000008825">
    <property type="component" value="Chromosome"/>
</dbReference>
<dbReference type="GO" id="GO:0022627">
    <property type="term" value="C:cytosolic small ribosomal subunit"/>
    <property type="evidence" value="ECO:0007669"/>
    <property type="project" value="TreeGrafter"/>
</dbReference>
<dbReference type="GO" id="GO:0003735">
    <property type="term" value="F:structural constituent of ribosome"/>
    <property type="evidence" value="ECO:0007669"/>
    <property type="project" value="InterPro"/>
</dbReference>
<dbReference type="GO" id="GO:0006412">
    <property type="term" value="P:translation"/>
    <property type="evidence" value="ECO:0007669"/>
    <property type="project" value="UniProtKB-UniRule"/>
</dbReference>
<dbReference type="CDD" id="cd01425">
    <property type="entry name" value="RPS2"/>
    <property type="match status" value="1"/>
</dbReference>
<dbReference type="FunFam" id="1.10.287.610:FF:000001">
    <property type="entry name" value="30S ribosomal protein S2"/>
    <property type="match status" value="1"/>
</dbReference>
<dbReference type="Gene3D" id="3.40.50.10490">
    <property type="entry name" value="Glucose-6-phosphate isomerase like protein, domain 1"/>
    <property type="match status" value="1"/>
</dbReference>
<dbReference type="Gene3D" id="1.10.287.610">
    <property type="entry name" value="Helix hairpin bin"/>
    <property type="match status" value="1"/>
</dbReference>
<dbReference type="HAMAP" id="MF_00291_B">
    <property type="entry name" value="Ribosomal_uS2_B"/>
    <property type="match status" value="1"/>
</dbReference>
<dbReference type="InterPro" id="IPR001865">
    <property type="entry name" value="Ribosomal_uS2"/>
</dbReference>
<dbReference type="InterPro" id="IPR005706">
    <property type="entry name" value="Ribosomal_uS2_bac/mit/plastid"/>
</dbReference>
<dbReference type="InterPro" id="IPR018130">
    <property type="entry name" value="Ribosomal_uS2_CS"/>
</dbReference>
<dbReference type="InterPro" id="IPR023591">
    <property type="entry name" value="Ribosomal_uS2_flav_dom_sf"/>
</dbReference>
<dbReference type="NCBIfam" id="TIGR01011">
    <property type="entry name" value="rpsB_bact"/>
    <property type="match status" value="1"/>
</dbReference>
<dbReference type="PANTHER" id="PTHR12534">
    <property type="entry name" value="30S RIBOSOMAL PROTEIN S2 PROKARYOTIC AND ORGANELLAR"/>
    <property type="match status" value="1"/>
</dbReference>
<dbReference type="PANTHER" id="PTHR12534:SF0">
    <property type="entry name" value="SMALL RIBOSOMAL SUBUNIT PROTEIN US2M"/>
    <property type="match status" value="1"/>
</dbReference>
<dbReference type="Pfam" id="PF00318">
    <property type="entry name" value="Ribosomal_S2"/>
    <property type="match status" value="1"/>
</dbReference>
<dbReference type="PRINTS" id="PR00395">
    <property type="entry name" value="RIBOSOMALS2"/>
</dbReference>
<dbReference type="SUPFAM" id="SSF52313">
    <property type="entry name" value="Ribosomal protein S2"/>
    <property type="match status" value="1"/>
</dbReference>
<dbReference type="PROSITE" id="PS00962">
    <property type="entry name" value="RIBOSOMAL_S2_1"/>
    <property type="match status" value="1"/>
</dbReference>
<dbReference type="PROSITE" id="PS00963">
    <property type="entry name" value="RIBOSOMAL_S2_2"/>
    <property type="match status" value="1"/>
</dbReference>
<sequence length="255" mass="28141">MSNITMKELLEAGVHFGHQTKRWNPKMKPYIFGARNGIYIIDLQKTVRLFKNAYSFVTDAAQAGETVLFVGTKKQAQDSVAEEAQRCGQFYVNDRWLGGMLTNFATVKQSIDRLKRLDAMIADGTIEAYTKKEQLKLAKEREKLEKTLGGIKGMGKVPGVLFVVDPKNEEIAVSEAKKLGIPVVAIVDTNCDPDDINYVIPGNDDAIRAIRLLTSKMADAVLEGGQARNARLQTGAEEEFSTEGEEVVEETPAEA</sequence>
<reference key="1">
    <citation type="submission" date="2008-07" db="EMBL/GenBank/DDBJ databases">
        <title>Complete sequence of Geobacter bemidjiensis BEM.</title>
        <authorList>
            <consortium name="US DOE Joint Genome Institute"/>
            <person name="Lucas S."/>
            <person name="Copeland A."/>
            <person name="Lapidus A."/>
            <person name="Glavina del Rio T."/>
            <person name="Dalin E."/>
            <person name="Tice H."/>
            <person name="Bruce D."/>
            <person name="Goodwin L."/>
            <person name="Pitluck S."/>
            <person name="Kiss H."/>
            <person name="Brettin T."/>
            <person name="Detter J.C."/>
            <person name="Han C."/>
            <person name="Kuske C.R."/>
            <person name="Schmutz J."/>
            <person name="Larimer F."/>
            <person name="Land M."/>
            <person name="Hauser L."/>
            <person name="Kyrpides N."/>
            <person name="Lykidis A."/>
            <person name="Lovley D."/>
            <person name="Richardson P."/>
        </authorList>
    </citation>
    <scope>NUCLEOTIDE SEQUENCE [LARGE SCALE GENOMIC DNA]</scope>
    <source>
        <strain>ATCC BAA-1014 / DSM 16622 / JCM 12645 / Bem</strain>
    </source>
</reference>
<organism>
    <name type="scientific">Citrifermentans bemidjiense (strain ATCC BAA-1014 / DSM 16622 / JCM 12645 / Bem)</name>
    <name type="common">Geobacter bemidjiensis</name>
    <dbReference type="NCBI Taxonomy" id="404380"/>
    <lineage>
        <taxon>Bacteria</taxon>
        <taxon>Pseudomonadati</taxon>
        <taxon>Thermodesulfobacteriota</taxon>
        <taxon>Desulfuromonadia</taxon>
        <taxon>Geobacterales</taxon>
        <taxon>Geobacteraceae</taxon>
        <taxon>Citrifermentans</taxon>
    </lineage>
</organism>
<accession>B5EHW1</accession>
<feature type="chain" id="PRO_1000115023" description="Small ribosomal subunit protein uS2">
    <location>
        <begin position="1"/>
        <end position="255"/>
    </location>
</feature>
<feature type="region of interest" description="Disordered" evidence="2">
    <location>
        <begin position="231"/>
        <end position="255"/>
    </location>
</feature>
<feature type="compositionally biased region" description="Acidic residues" evidence="2">
    <location>
        <begin position="236"/>
        <end position="255"/>
    </location>
</feature>
<proteinExistence type="inferred from homology"/>
<protein>
    <recommendedName>
        <fullName evidence="1">Small ribosomal subunit protein uS2</fullName>
    </recommendedName>
    <alternativeName>
        <fullName evidence="3">30S ribosomal protein S2</fullName>
    </alternativeName>
</protein>
<keyword id="KW-1185">Reference proteome</keyword>
<keyword id="KW-0687">Ribonucleoprotein</keyword>
<keyword id="KW-0689">Ribosomal protein</keyword>